<organism>
    <name type="scientific">Pseudomonas aeruginosa (strain ATCC 15692 / DSM 22644 / CIP 104116 / JCM 14847 / LMG 12228 / 1C / PRS 101 / PAO1)</name>
    <dbReference type="NCBI Taxonomy" id="208964"/>
    <lineage>
        <taxon>Bacteria</taxon>
        <taxon>Pseudomonadati</taxon>
        <taxon>Pseudomonadota</taxon>
        <taxon>Gammaproteobacteria</taxon>
        <taxon>Pseudomonadales</taxon>
        <taxon>Pseudomonadaceae</taxon>
        <taxon>Pseudomonas</taxon>
    </lineage>
</organism>
<keyword id="KW-0002">3D-structure</keyword>
<keyword id="KW-0548">Nucleotidyltransferase</keyword>
<keyword id="KW-1185">Reference proteome</keyword>
<keyword id="KW-0808">Transferase</keyword>
<proteinExistence type="evidence at protein level"/>
<gene>
    <name type="primary">galU</name>
    <name type="ordered locus">PA2023</name>
</gene>
<reference key="1">
    <citation type="journal article" date="2000" name="Nature">
        <title>Complete genome sequence of Pseudomonas aeruginosa PAO1, an opportunistic pathogen.</title>
        <authorList>
            <person name="Stover C.K."/>
            <person name="Pham X.-Q.T."/>
            <person name="Erwin A.L."/>
            <person name="Mizoguchi S.D."/>
            <person name="Warrener P."/>
            <person name="Hickey M.J."/>
            <person name="Brinkman F.S.L."/>
            <person name="Hufnagle W.O."/>
            <person name="Kowalik D.J."/>
            <person name="Lagrou M."/>
            <person name="Garber R.L."/>
            <person name="Goltry L."/>
            <person name="Tolentino E."/>
            <person name="Westbrock-Wadman S."/>
            <person name="Yuan Y."/>
            <person name="Brody L.L."/>
            <person name="Coulter S.N."/>
            <person name="Folger K.R."/>
            <person name="Kas A."/>
            <person name="Larbig K."/>
            <person name="Lim R.M."/>
            <person name="Smith K.A."/>
            <person name="Spencer D.H."/>
            <person name="Wong G.K.-S."/>
            <person name="Wu Z."/>
            <person name="Paulsen I.T."/>
            <person name="Reizer J."/>
            <person name="Saier M.H. Jr."/>
            <person name="Hancock R.E.W."/>
            <person name="Lory S."/>
            <person name="Olson M.V."/>
        </authorList>
    </citation>
    <scope>NUCLEOTIDE SEQUENCE [LARGE SCALE GENOMIC DNA]</scope>
    <source>
        <strain>ATCC 15692 / DSM 22644 / CIP 104116 / JCM 14847 / LMG 12228 / 1C / PRS 101 / PAO1</strain>
    </source>
</reference>
<name>GALU_PSEAE</name>
<feature type="chain" id="PRO_0000201361" description="UTP--glucose-1-phosphate uridylyltransferase">
    <location>
        <begin position="1"/>
        <end position="279"/>
    </location>
</feature>
<comment type="function">
    <text evidence="1">May play a role in stationary phase survival.</text>
</comment>
<comment type="catalytic activity">
    <reaction>
        <text>alpha-D-glucose 1-phosphate + UTP + H(+) = UDP-alpha-D-glucose + diphosphate</text>
        <dbReference type="Rhea" id="RHEA:19889"/>
        <dbReference type="ChEBI" id="CHEBI:15378"/>
        <dbReference type="ChEBI" id="CHEBI:33019"/>
        <dbReference type="ChEBI" id="CHEBI:46398"/>
        <dbReference type="ChEBI" id="CHEBI:58601"/>
        <dbReference type="ChEBI" id="CHEBI:58885"/>
        <dbReference type="EC" id="2.7.7.9"/>
    </reaction>
</comment>
<comment type="similarity">
    <text evidence="2">Belongs to the UDPGP type 2 family.</text>
</comment>
<evidence type="ECO:0000250" key="1"/>
<evidence type="ECO:0000305" key="2"/>
<dbReference type="EC" id="2.7.7.9"/>
<dbReference type="EMBL" id="AE004091">
    <property type="protein sequence ID" value="AAG05411.1"/>
    <property type="molecule type" value="Genomic_DNA"/>
</dbReference>
<dbReference type="PIR" id="A83394">
    <property type="entry name" value="A83394"/>
</dbReference>
<dbReference type="RefSeq" id="NP_250713.1">
    <property type="nucleotide sequence ID" value="NC_002516.2"/>
</dbReference>
<dbReference type="RefSeq" id="WP_003088639.1">
    <property type="nucleotide sequence ID" value="NZ_QZGE01000026.1"/>
</dbReference>
<dbReference type="PDB" id="8F73">
    <property type="method" value="X-ray"/>
    <property type="resolution" value="2.90 A"/>
    <property type="chains" value="A/B/C/D/E/F/G/H=2-279"/>
</dbReference>
<dbReference type="PDBsum" id="8F73"/>
<dbReference type="SMR" id="Q9I291"/>
<dbReference type="FunCoup" id="Q9I291">
    <property type="interactions" value="567"/>
</dbReference>
<dbReference type="STRING" id="208964.PA2023"/>
<dbReference type="PaxDb" id="208964-PA2023"/>
<dbReference type="DNASU" id="879968"/>
<dbReference type="GeneID" id="77221391"/>
<dbReference type="GeneID" id="879968"/>
<dbReference type="KEGG" id="pae:PA2023"/>
<dbReference type="PATRIC" id="fig|208964.12.peg.2108"/>
<dbReference type="PseudoCAP" id="PA2023"/>
<dbReference type="HOGENOM" id="CLU_029499_1_2_6"/>
<dbReference type="InParanoid" id="Q9I291"/>
<dbReference type="OrthoDB" id="9803306at2"/>
<dbReference type="PhylomeDB" id="Q9I291"/>
<dbReference type="BioCyc" id="PAER208964:G1FZ6-2061-MONOMER"/>
<dbReference type="Proteomes" id="UP000002438">
    <property type="component" value="Chromosome"/>
</dbReference>
<dbReference type="GO" id="GO:0003983">
    <property type="term" value="F:UTP:glucose-1-phosphate uridylyltransferase activity"/>
    <property type="evidence" value="ECO:0007669"/>
    <property type="project" value="UniProtKB-EC"/>
</dbReference>
<dbReference type="GO" id="GO:0009244">
    <property type="term" value="P:lipopolysaccharide core region biosynthetic process"/>
    <property type="evidence" value="ECO:0000315"/>
    <property type="project" value="PseudoCAP"/>
</dbReference>
<dbReference type="GO" id="GO:0006011">
    <property type="term" value="P:UDP-alpha-D-glucose metabolic process"/>
    <property type="evidence" value="ECO:0007669"/>
    <property type="project" value="InterPro"/>
</dbReference>
<dbReference type="CDD" id="cd02541">
    <property type="entry name" value="UGPase_prokaryotic"/>
    <property type="match status" value="1"/>
</dbReference>
<dbReference type="FunFam" id="3.90.550.10:FF:000045">
    <property type="entry name" value="UTP--glucose-1-phosphate uridylyltransferase"/>
    <property type="match status" value="1"/>
</dbReference>
<dbReference type="Gene3D" id="3.90.550.10">
    <property type="entry name" value="Spore Coat Polysaccharide Biosynthesis Protein SpsA, Chain A"/>
    <property type="match status" value="1"/>
</dbReference>
<dbReference type="InterPro" id="IPR005771">
    <property type="entry name" value="GalU_uridylyltTrfase_bac/arc"/>
</dbReference>
<dbReference type="InterPro" id="IPR005835">
    <property type="entry name" value="NTP_transferase_dom"/>
</dbReference>
<dbReference type="InterPro" id="IPR029044">
    <property type="entry name" value="Nucleotide-diphossugar_trans"/>
</dbReference>
<dbReference type="NCBIfam" id="TIGR01099">
    <property type="entry name" value="galU"/>
    <property type="match status" value="1"/>
</dbReference>
<dbReference type="PANTHER" id="PTHR43197">
    <property type="entry name" value="UTP--GLUCOSE-1-PHOSPHATE URIDYLYLTRANSFERASE"/>
    <property type="match status" value="1"/>
</dbReference>
<dbReference type="PANTHER" id="PTHR43197:SF1">
    <property type="entry name" value="UTP--GLUCOSE-1-PHOSPHATE URIDYLYLTRANSFERASE"/>
    <property type="match status" value="1"/>
</dbReference>
<dbReference type="Pfam" id="PF00483">
    <property type="entry name" value="NTP_transferase"/>
    <property type="match status" value="1"/>
</dbReference>
<dbReference type="SUPFAM" id="SSF53448">
    <property type="entry name" value="Nucleotide-diphospho-sugar transferases"/>
    <property type="match status" value="1"/>
</dbReference>
<protein>
    <recommendedName>
        <fullName>UTP--glucose-1-phosphate uridylyltransferase</fullName>
        <ecNumber>2.7.7.9</ecNumber>
    </recommendedName>
    <alternativeName>
        <fullName>Alpha-D-glucosyl-1-phosphate uridylyltransferase</fullName>
    </alternativeName>
    <alternativeName>
        <fullName>UDP-glucose pyrophosphorylase</fullName>
        <shortName>UDPGP</shortName>
    </alternativeName>
    <alternativeName>
        <fullName>Uridine diphosphoglucose pyrophosphorylase</fullName>
    </alternativeName>
</protein>
<sequence>MIKKCLFPAAGYGTRFLPATKAMPKEMLPVVNKPLIQYAVEEALEAGLSEIGIVTGRGKRSLEDHFDISYELEHQIRNTDKEKYLVGIRRLIDECTFAYTRQVEMKGLGHAILTGRPLIGDEPFAVVLADDLCLNLEGDSVLKQMVKLYNQFRCSIVAIQEVPPEETNKYGVIAGEMIRDDIFRVNTMVEKPKPEEAPSNLAIIGRYILTPDIFDLIEQTEPGKGGEIQITDALMKQAQDGCVLAYKFKGKRFDCGSAEGYIEATNFCYENLYKTGKAH</sequence>
<accession>Q9I291</accession>